<reference key="1">
    <citation type="journal article" date="2007" name="Genes Dev.">
        <title>New insights into Acinetobacter baumannii pathogenesis revealed by high-density pyrosequencing and transposon mutagenesis.</title>
        <authorList>
            <person name="Smith M.G."/>
            <person name="Gianoulis T.A."/>
            <person name="Pukatzki S."/>
            <person name="Mekalanos J.J."/>
            <person name="Ornston L.N."/>
            <person name="Gerstein M."/>
            <person name="Snyder M."/>
        </authorList>
    </citation>
    <scope>NUCLEOTIDE SEQUENCE [LARGE SCALE GENOMIC DNA]</scope>
    <source>
        <strain>ATCC 17978 / DSM 105126 / CIP 53.77 / LMG 1025 / NCDC KC755 / 5377</strain>
    </source>
</reference>
<accession>A3M8J6</accession>
<organism>
    <name type="scientific">Acinetobacter baumannii (strain ATCC 17978 / DSM 105126 / CIP 53.77 / LMG 1025 / NCDC KC755 / 5377)</name>
    <dbReference type="NCBI Taxonomy" id="400667"/>
    <lineage>
        <taxon>Bacteria</taxon>
        <taxon>Pseudomonadati</taxon>
        <taxon>Pseudomonadota</taxon>
        <taxon>Gammaproteobacteria</taxon>
        <taxon>Moraxellales</taxon>
        <taxon>Moraxellaceae</taxon>
        <taxon>Acinetobacter</taxon>
        <taxon>Acinetobacter calcoaceticus/baumannii complex</taxon>
    </lineage>
</organism>
<comment type="function">
    <text evidence="1">Channel that opens in response to stretch forces in the membrane lipid bilayer. May participate in the regulation of osmotic pressure changes within the cell.</text>
</comment>
<comment type="subunit">
    <text evidence="1">Homopentamer.</text>
</comment>
<comment type="subcellular location">
    <subcellularLocation>
        <location evidence="1">Cell inner membrane</location>
        <topology evidence="1">Multi-pass membrane protein</topology>
    </subcellularLocation>
</comment>
<comment type="similarity">
    <text evidence="1">Belongs to the MscL family.</text>
</comment>
<proteinExistence type="inferred from homology"/>
<dbReference type="EMBL" id="CP000521">
    <property type="protein sequence ID" value="ABO13240.2"/>
    <property type="molecule type" value="Genomic_DNA"/>
</dbReference>
<dbReference type="RefSeq" id="WP_000022555.1">
    <property type="nucleotide sequence ID" value="NZ_CP053098.1"/>
</dbReference>
<dbReference type="SMR" id="A3M8J6"/>
<dbReference type="GeneID" id="92895113"/>
<dbReference type="KEGG" id="acb:A1S_2834"/>
<dbReference type="HOGENOM" id="CLU_095787_0_1_6"/>
<dbReference type="GO" id="GO:0005886">
    <property type="term" value="C:plasma membrane"/>
    <property type="evidence" value="ECO:0007669"/>
    <property type="project" value="UniProtKB-SubCell"/>
</dbReference>
<dbReference type="GO" id="GO:0008381">
    <property type="term" value="F:mechanosensitive monoatomic ion channel activity"/>
    <property type="evidence" value="ECO:0007669"/>
    <property type="project" value="UniProtKB-UniRule"/>
</dbReference>
<dbReference type="Gene3D" id="1.10.1200.120">
    <property type="entry name" value="Large-conductance mechanosensitive channel, MscL, domain 1"/>
    <property type="match status" value="1"/>
</dbReference>
<dbReference type="HAMAP" id="MF_00115">
    <property type="entry name" value="MscL"/>
    <property type="match status" value="1"/>
</dbReference>
<dbReference type="InterPro" id="IPR019823">
    <property type="entry name" value="Mechanosensitive_channel_CS"/>
</dbReference>
<dbReference type="InterPro" id="IPR001185">
    <property type="entry name" value="MS_channel"/>
</dbReference>
<dbReference type="InterPro" id="IPR037673">
    <property type="entry name" value="MSC/AndL"/>
</dbReference>
<dbReference type="InterPro" id="IPR036019">
    <property type="entry name" value="MscL_channel"/>
</dbReference>
<dbReference type="NCBIfam" id="TIGR00220">
    <property type="entry name" value="mscL"/>
    <property type="match status" value="1"/>
</dbReference>
<dbReference type="NCBIfam" id="NF001843">
    <property type="entry name" value="PRK00567.1-4"/>
    <property type="match status" value="1"/>
</dbReference>
<dbReference type="NCBIfam" id="NF010557">
    <property type="entry name" value="PRK13952.1"/>
    <property type="match status" value="1"/>
</dbReference>
<dbReference type="PANTHER" id="PTHR30266:SF2">
    <property type="entry name" value="LARGE-CONDUCTANCE MECHANOSENSITIVE CHANNEL"/>
    <property type="match status" value="1"/>
</dbReference>
<dbReference type="PANTHER" id="PTHR30266">
    <property type="entry name" value="MECHANOSENSITIVE CHANNEL MSCL"/>
    <property type="match status" value="1"/>
</dbReference>
<dbReference type="Pfam" id="PF01741">
    <property type="entry name" value="MscL"/>
    <property type="match status" value="1"/>
</dbReference>
<dbReference type="PRINTS" id="PR01264">
    <property type="entry name" value="MECHCHANNEL"/>
</dbReference>
<dbReference type="SUPFAM" id="SSF81330">
    <property type="entry name" value="Gated mechanosensitive channel"/>
    <property type="match status" value="1"/>
</dbReference>
<dbReference type="PROSITE" id="PS01327">
    <property type="entry name" value="MSCL"/>
    <property type="match status" value="1"/>
</dbReference>
<protein>
    <recommendedName>
        <fullName evidence="1">Large-conductance mechanosensitive channel</fullName>
    </recommendedName>
</protein>
<feature type="chain" id="PRO_1000094872" description="Large-conductance mechanosensitive channel">
    <location>
        <begin position="1"/>
        <end position="143"/>
    </location>
</feature>
<feature type="transmembrane region" description="Helical" evidence="1">
    <location>
        <begin position="10"/>
        <end position="30"/>
    </location>
</feature>
<feature type="transmembrane region" description="Helical" evidence="1">
    <location>
        <begin position="40"/>
        <end position="60"/>
    </location>
</feature>
<feature type="transmembrane region" description="Helical" evidence="1">
    <location>
        <begin position="86"/>
        <end position="106"/>
    </location>
</feature>
<keyword id="KW-0997">Cell inner membrane</keyword>
<keyword id="KW-1003">Cell membrane</keyword>
<keyword id="KW-0407">Ion channel</keyword>
<keyword id="KW-0406">Ion transport</keyword>
<keyword id="KW-0472">Membrane</keyword>
<keyword id="KW-0812">Transmembrane</keyword>
<keyword id="KW-1133">Transmembrane helix</keyword>
<keyword id="KW-0813">Transport</keyword>
<gene>
    <name evidence="1" type="primary">mscL</name>
    <name type="ordered locus">A1S_2834</name>
</gene>
<evidence type="ECO:0000255" key="1">
    <source>
        <dbReference type="HAMAP-Rule" id="MF_00115"/>
    </source>
</evidence>
<name>MSCL_ACIBT</name>
<sequence>MSIIQEFKEFAIKGNMMDLAIGVIIGGAFGKIVDSLVKDIIMPLITVITGGGVDFSQKFIVLGANPNNLQSLDALQKAGINVLTYGNFLTILINFLILAWVVFLMVKLLNKLRRDKNEPEAPAATPEDIQLLREIRDELKKQA</sequence>